<dbReference type="EMBL" id="L19338">
    <property type="protein sequence ID" value="AAA75419.1"/>
    <property type="molecule type" value="Genomic_DNA"/>
</dbReference>
<dbReference type="EMBL" id="AE006468">
    <property type="protein sequence ID" value="AAL19500.1"/>
    <property type="molecule type" value="Genomic_DNA"/>
</dbReference>
<dbReference type="RefSeq" id="NP_459541.1">
    <property type="nucleotide sequence ID" value="NC_003197.2"/>
</dbReference>
<dbReference type="RefSeq" id="WP_000754233.1">
    <property type="nucleotide sequence ID" value="NC_003197.2"/>
</dbReference>
<dbReference type="SMR" id="P37924"/>
<dbReference type="STRING" id="99287.STM0546"/>
<dbReference type="PaxDb" id="99287-STM0546"/>
<dbReference type="GeneID" id="1252066"/>
<dbReference type="KEGG" id="stm:STM0546"/>
<dbReference type="PATRIC" id="fig|99287.12.peg.579"/>
<dbReference type="HOGENOM" id="CLU_009120_3_1_6"/>
<dbReference type="OMA" id="GELLIQW"/>
<dbReference type="PhylomeDB" id="P37924"/>
<dbReference type="BioCyc" id="SENT99287:STM0546-MONOMER"/>
<dbReference type="Proteomes" id="UP000001014">
    <property type="component" value="Chromosome"/>
</dbReference>
<dbReference type="GO" id="GO:0009279">
    <property type="term" value="C:cell outer membrane"/>
    <property type="evidence" value="ECO:0000318"/>
    <property type="project" value="GO_Central"/>
</dbReference>
<dbReference type="GO" id="GO:0015473">
    <property type="term" value="F:fimbrial usher porin activity"/>
    <property type="evidence" value="ECO:0000318"/>
    <property type="project" value="GO_Central"/>
</dbReference>
<dbReference type="GO" id="GO:0009297">
    <property type="term" value="P:pilus assembly"/>
    <property type="evidence" value="ECO:0000318"/>
    <property type="project" value="GO_Central"/>
</dbReference>
<dbReference type="FunFam" id="2.60.40.2610:FF:000001">
    <property type="entry name" value="Outer membrane fimbrial usher protein"/>
    <property type="match status" value="1"/>
</dbReference>
<dbReference type="FunFam" id="3.10.20.410:FF:000002">
    <property type="entry name" value="Outer membrane usher protein FimD"/>
    <property type="match status" value="1"/>
</dbReference>
<dbReference type="FunFam" id="2.60.40.3110:FF:000001">
    <property type="entry name" value="Putative fimbrial outer membrane usher"/>
    <property type="match status" value="1"/>
</dbReference>
<dbReference type="Gene3D" id="2.60.40.2070">
    <property type="match status" value="1"/>
</dbReference>
<dbReference type="Gene3D" id="2.60.40.3110">
    <property type="match status" value="1"/>
</dbReference>
<dbReference type="Gene3D" id="3.10.20.410">
    <property type="match status" value="1"/>
</dbReference>
<dbReference type="Gene3D" id="2.60.40.2610">
    <property type="entry name" value="Outer membrane usher protein FimD, plug domain"/>
    <property type="match status" value="1"/>
</dbReference>
<dbReference type="InterPro" id="IPR000015">
    <property type="entry name" value="Fimb_usher"/>
</dbReference>
<dbReference type="InterPro" id="IPR018030">
    <property type="entry name" value="Fimbrial_membr_usher_CS"/>
</dbReference>
<dbReference type="InterPro" id="IPR042186">
    <property type="entry name" value="FimD_plug_dom"/>
</dbReference>
<dbReference type="InterPro" id="IPR025949">
    <property type="entry name" value="PapC-like_C"/>
</dbReference>
<dbReference type="InterPro" id="IPR043142">
    <property type="entry name" value="PapC-like_C_sf"/>
</dbReference>
<dbReference type="InterPro" id="IPR025885">
    <property type="entry name" value="PapC_N"/>
</dbReference>
<dbReference type="InterPro" id="IPR037224">
    <property type="entry name" value="PapC_N_sf"/>
</dbReference>
<dbReference type="NCBIfam" id="NF011740">
    <property type="entry name" value="PRK15193.1"/>
    <property type="match status" value="1"/>
</dbReference>
<dbReference type="NCBIfam" id="NF011745">
    <property type="entry name" value="PRK15198.1"/>
    <property type="match status" value="1"/>
</dbReference>
<dbReference type="PANTHER" id="PTHR30451">
    <property type="entry name" value="OUTER MEMBRANE USHER PROTEIN"/>
    <property type="match status" value="1"/>
</dbReference>
<dbReference type="PANTHER" id="PTHR30451:SF6">
    <property type="entry name" value="OUTER MEMBRANE USHER PROTEIN SFMD"/>
    <property type="match status" value="1"/>
</dbReference>
<dbReference type="Pfam" id="PF13953">
    <property type="entry name" value="PapC_C"/>
    <property type="match status" value="1"/>
</dbReference>
<dbReference type="Pfam" id="PF13954">
    <property type="entry name" value="PapC_N"/>
    <property type="match status" value="1"/>
</dbReference>
<dbReference type="Pfam" id="PF00577">
    <property type="entry name" value="Usher"/>
    <property type="match status" value="1"/>
</dbReference>
<dbReference type="SUPFAM" id="SSF141729">
    <property type="entry name" value="FimD N-terminal domain-like"/>
    <property type="match status" value="1"/>
</dbReference>
<dbReference type="PROSITE" id="PS01151">
    <property type="entry name" value="FIMBRIAL_USHER"/>
    <property type="match status" value="1"/>
</dbReference>
<evidence type="ECO:0000250" key="1"/>
<evidence type="ECO:0000255" key="2"/>
<evidence type="ECO:0000305" key="3"/>
<protein>
    <recommendedName>
        <fullName>Outer membrane usher protein FimD</fullName>
    </recommendedName>
</protein>
<keyword id="KW-0998">Cell outer membrane</keyword>
<keyword id="KW-1015">Disulfide bond</keyword>
<keyword id="KW-1029">Fimbrium biogenesis</keyword>
<keyword id="KW-0472">Membrane</keyword>
<keyword id="KW-1185">Reference proteome</keyword>
<keyword id="KW-0732">Signal</keyword>
<keyword id="KW-0812">Transmembrane</keyword>
<keyword id="KW-1134">Transmembrane beta strand</keyword>
<keyword id="KW-0813">Transport</keyword>
<reference key="1">
    <citation type="submission" date="1993-06" db="EMBL/GenBank/DDBJ databases">
        <title>The complete nucleotide sequence of a Salmonella typhimurium type 1 fimbrial gene cluster.</title>
        <authorList>
            <person name="Swenson D.L."/>
            <person name="Clegg S."/>
        </authorList>
    </citation>
    <scope>NUCLEOTIDE SEQUENCE [GENOMIC DNA]</scope>
</reference>
<reference key="2">
    <citation type="journal article" date="2001" name="Nature">
        <title>Complete genome sequence of Salmonella enterica serovar Typhimurium LT2.</title>
        <authorList>
            <person name="McClelland M."/>
            <person name="Sanderson K.E."/>
            <person name="Spieth J."/>
            <person name="Clifton S.W."/>
            <person name="Latreille P."/>
            <person name="Courtney L."/>
            <person name="Porwollik S."/>
            <person name="Ali J."/>
            <person name="Dante M."/>
            <person name="Du F."/>
            <person name="Hou S."/>
            <person name="Layman D."/>
            <person name="Leonard S."/>
            <person name="Nguyen C."/>
            <person name="Scott K."/>
            <person name="Holmes A."/>
            <person name="Grewal N."/>
            <person name="Mulvaney E."/>
            <person name="Ryan E."/>
            <person name="Sun H."/>
            <person name="Florea L."/>
            <person name="Miller W."/>
            <person name="Stoneking T."/>
            <person name="Nhan M."/>
            <person name="Waterston R."/>
            <person name="Wilson R.K."/>
        </authorList>
    </citation>
    <scope>NUCLEOTIDE SEQUENCE [LARGE SCALE GENOMIC DNA]</scope>
    <source>
        <strain>LT2 / SGSC1412 / ATCC 700720</strain>
    </source>
</reference>
<proteinExistence type="inferred from homology"/>
<organism>
    <name type="scientific">Salmonella typhimurium (strain LT2 / SGSC1412 / ATCC 700720)</name>
    <dbReference type="NCBI Taxonomy" id="99287"/>
    <lineage>
        <taxon>Bacteria</taxon>
        <taxon>Pseudomonadati</taxon>
        <taxon>Pseudomonadota</taxon>
        <taxon>Gammaproteobacteria</taxon>
        <taxon>Enterobacterales</taxon>
        <taxon>Enterobacteriaceae</taxon>
        <taxon>Salmonella</taxon>
    </lineage>
</organism>
<name>FIMD_SALTY</name>
<comment type="function">
    <text>Involved in the export and assembly of FimA fimbrial subunits across the outer membrane.</text>
</comment>
<comment type="subcellular location">
    <subcellularLocation>
        <location evidence="1">Cell outer membrane</location>
        <topology evidence="1">Multi-pass membrane protein</topology>
    </subcellularLocation>
</comment>
<comment type="similarity">
    <text evidence="3">Belongs to the fimbrial export usher family.</text>
</comment>
<gene>
    <name type="primary">fimD</name>
    <name type="ordered locus">STM0546</name>
</gene>
<sequence>MKKTTWFAGRFPGYVSPLSSVALSVLAALCPLTSRGESYFNPAFLSADTASVADLSRFEKGNHQPPGIYRVDIWRNDEFVATQDIRFEAGAVGTGDKSGGLMPCFTPEWIKRLGVNTAAFPVSDKGVDTTCIHLPEKIPGAEVAFDFASMRLNISLPQASLLNSARGYIPPEEWDEGIPAALINYSFTGSRGTDSDSYFLSLLSGLNYGPWRLRNNGAWNYSKGDGYHSQRWNNIGTWVQRAIIPLKSELVMGDSNTGNDVFDSVGFRGARLYSSDNMYPDSLQGYAPTVRGIARTAAKLTIRQNGYVIYQSYVSPGAFAITDLNPTSSSGDLEVTVDEKDGSQQRYTVPYSTVPLLQREGRVKYDLVAGDFRSGNSQQSSPFFFQGTVIAGLPAGLTAYGGTQLADRYRAVVVGAGRNLGDWGAVSVDVTHARSQLADDSTHQGQSLRFLYAKSLNNYGTNFQLLGYRYSTRGFYTLDDVAYRSMEGYDYEYDSDGRRHKVPVAQSYHNLRYSKKGRFQVNISQNLGDYGSLYLSGSQQNYWNTADTNTWYQLGYASGWQGISYSLSWSWSESVGSSGADRILAFNMSVPFSVLTGRRYARDTILDRTYATFNANRNRDGDNSWQTGVGGTLLEGRNLSYSVTQGRSSSNGYSGSASASWQATYGTLGVGYNYDRDQHDYNWQLSGGVVGHADGITFSQPLGDTNVLIKAPGAKGVRIENQTGVKTDWRGYAVMPYATVYRYNRVALDTNTMDNHTDVENNVSSVVPTEGALVRAAFDTRIGVRAIITARLGGRPLPFGAIVRETASGITSMVGDDGQIYLSGLPLKGELFIQWGEGKNARCIAPYALAEDSLKQAITIASATCIRPAS</sequence>
<feature type="signal peptide" evidence="2">
    <location>
        <begin position="1"/>
        <end position="27"/>
    </location>
</feature>
<feature type="chain" id="PRO_0000009314" description="Outer membrane usher protein FimD">
    <location>
        <begin position="28"/>
        <end position="870"/>
    </location>
</feature>
<feature type="disulfide bond" evidence="2">
    <location>
        <begin position="843"/>
        <end position="865"/>
    </location>
</feature>
<feature type="sequence conflict" description="In Ref. 1; AAA75419." evidence="3" ref="1">
    <original>V</original>
    <variation>F</variation>
    <location>
        <position position="265"/>
    </location>
</feature>
<feature type="sequence conflict" description="In Ref. 1; AAA75419." evidence="3" ref="1">
    <original>G</original>
    <variation>A</variation>
    <location>
        <position position="361"/>
    </location>
</feature>
<accession>P37924</accession>